<proteinExistence type="inferred from homology"/>
<keyword id="KW-0235">DNA replication</keyword>
<keyword id="KW-0238">DNA-binding</keyword>
<keyword id="KW-0539">Nucleus</keyword>
<keyword id="KW-1185">Reference proteome</keyword>
<sequence>MDTTAEENALRREIVKTFQIHAFELKKEAVKLCVKLFLDHDKETRKKWTNKMIELLKKQTLQSSLISEELIRDTFRQCKSKGTQDAGKLLNVFDAFSLQPYDFDADLRKMVLRKEKTSLAADSSSFSHAARQRFFIVKQRAMRCASLKNFKFTTCEILGSSTKHLQSVVVLGMLTQQKADCYHIEDLSGSVEVEFKEDTKFHHALFHEHSIAIFEGTFENSVLTVNEVAMVPVESAEVTRKELSSNENWFGGDDKIAFRCSDRLRSALAKQEDTSLVFLSDVFLDDKKVMKAVFKLLQGYKDQPPVAIVFCGNFCSRPRQTDTIDLLDRGFRWLANQLTPLRKDYEKTQFIFVPGPDDPFVDTVLPRPHLPSLLFKHISPIISCTFASNPCRIQFASQEIVVFRSDLIKKTCRHSINSITVESIPSRYARSVLSQAHLCPLPQHITPVLPDFSHSLSLHPLPDLLITADRFETFTEKVVGADTIVSNPGSFSRSNYTFHVYYPCQNRVEASQIPVSELDDHSNIKNVIIFFFLF</sequence>
<dbReference type="EMBL" id="FO080903">
    <property type="protein sequence ID" value="CCD67651.1"/>
    <property type="molecule type" value="Genomic_DNA"/>
</dbReference>
<dbReference type="PIR" id="T29484">
    <property type="entry name" value="T29484"/>
</dbReference>
<dbReference type="RefSeq" id="NP_501489.3">
    <property type="nucleotide sequence ID" value="NM_069088.5"/>
</dbReference>
<dbReference type="SMR" id="Q19196"/>
<dbReference type="BioGRID" id="42783">
    <property type="interactions" value="4"/>
</dbReference>
<dbReference type="FunCoup" id="Q19196">
    <property type="interactions" value="1219"/>
</dbReference>
<dbReference type="STRING" id="6239.F08B4.5.1"/>
<dbReference type="PaxDb" id="6239-F08B4.5"/>
<dbReference type="PeptideAtlas" id="Q19196"/>
<dbReference type="EnsemblMetazoa" id="F08B4.5.1">
    <property type="protein sequence ID" value="F08B4.5.1"/>
    <property type="gene ID" value="WBGene00017237"/>
</dbReference>
<dbReference type="GeneID" id="177673"/>
<dbReference type="KEGG" id="cel:CELE_F08B4.5"/>
<dbReference type="UCSC" id="F08B4.5">
    <property type="organism name" value="c. elegans"/>
</dbReference>
<dbReference type="AGR" id="WB:WBGene00017237"/>
<dbReference type="CTD" id="177673"/>
<dbReference type="WormBase" id="F08B4.5">
    <property type="protein sequence ID" value="CE49630"/>
    <property type="gene ID" value="WBGene00017237"/>
    <property type="gene designation" value="pole-2"/>
</dbReference>
<dbReference type="eggNOG" id="KOG3818">
    <property type="taxonomic scope" value="Eukaryota"/>
</dbReference>
<dbReference type="GeneTree" id="ENSGT00390000012435"/>
<dbReference type="HOGENOM" id="CLU_010628_2_1_1"/>
<dbReference type="InParanoid" id="Q19196"/>
<dbReference type="OrthoDB" id="10254730at2759"/>
<dbReference type="PhylomeDB" id="Q19196"/>
<dbReference type="Reactome" id="R-CEL-110314">
    <property type="pathway name" value="Recognition of DNA damage by PCNA-containing replication complex"/>
</dbReference>
<dbReference type="Reactome" id="R-CEL-5651801">
    <property type="pathway name" value="PCNA-Dependent Long Patch Base Excision Repair"/>
</dbReference>
<dbReference type="Reactome" id="R-CEL-5656169">
    <property type="pathway name" value="Termination of translesion DNA synthesis"/>
</dbReference>
<dbReference type="Reactome" id="R-CEL-5696397">
    <property type="pathway name" value="Gap-filling DNA repair synthesis and ligation in GG-NER"/>
</dbReference>
<dbReference type="Reactome" id="R-CEL-5696400">
    <property type="pathway name" value="Dual Incision in GG-NER"/>
</dbReference>
<dbReference type="Reactome" id="R-CEL-6782135">
    <property type="pathway name" value="Dual incision in TC-NER"/>
</dbReference>
<dbReference type="Reactome" id="R-CEL-6782210">
    <property type="pathway name" value="Gap-filling DNA repair synthesis and ligation in TC-NER"/>
</dbReference>
<dbReference type="Reactome" id="R-CEL-68952">
    <property type="pathway name" value="DNA replication initiation"/>
</dbReference>
<dbReference type="Reactome" id="R-CEL-68962">
    <property type="pathway name" value="Activation of the pre-replicative complex"/>
</dbReference>
<dbReference type="PRO" id="PR:Q19196"/>
<dbReference type="Proteomes" id="UP000001940">
    <property type="component" value="Chromosome IV"/>
</dbReference>
<dbReference type="Bgee" id="WBGene00017237">
    <property type="expression patterns" value="Expressed in embryo and 4 other cell types or tissues"/>
</dbReference>
<dbReference type="GO" id="GO:0008622">
    <property type="term" value="C:epsilon DNA polymerase complex"/>
    <property type="evidence" value="ECO:0000318"/>
    <property type="project" value="GO_Central"/>
</dbReference>
<dbReference type="GO" id="GO:0003677">
    <property type="term" value="F:DNA binding"/>
    <property type="evidence" value="ECO:0007669"/>
    <property type="project" value="UniProtKB-KW"/>
</dbReference>
<dbReference type="GO" id="GO:0006261">
    <property type="term" value="P:DNA-templated DNA replication"/>
    <property type="evidence" value="ECO:0000318"/>
    <property type="project" value="GO_Central"/>
</dbReference>
<dbReference type="GO" id="GO:0042276">
    <property type="term" value="P:error-prone translesion synthesis"/>
    <property type="evidence" value="ECO:0000318"/>
    <property type="project" value="GO_Central"/>
</dbReference>
<dbReference type="FunFam" id="1.10.8.60:FF:000277">
    <property type="entry name" value="DNA polymerase epsilon subunit"/>
    <property type="match status" value="1"/>
</dbReference>
<dbReference type="FunFam" id="3.60.21.50:FF:000007">
    <property type="entry name" value="DNA polymerase epsilon subunit"/>
    <property type="match status" value="1"/>
</dbReference>
<dbReference type="Gene3D" id="1.10.8.60">
    <property type="match status" value="1"/>
</dbReference>
<dbReference type="Gene3D" id="3.60.21.50">
    <property type="match status" value="1"/>
</dbReference>
<dbReference type="InterPro" id="IPR007185">
    <property type="entry name" value="DNA_pol_a/d/e_bsu"/>
</dbReference>
<dbReference type="InterPro" id="IPR024639">
    <property type="entry name" value="DNA_pol_e_bsu_N"/>
</dbReference>
<dbReference type="InterPro" id="IPR016266">
    <property type="entry name" value="POLE2"/>
</dbReference>
<dbReference type="PANTHER" id="PTHR12708:SF0">
    <property type="entry name" value="DNA POLYMERASE EPSILON SUBUNIT 2"/>
    <property type="match status" value="1"/>
</dbReference>
<dbReference type="PANTHER" id="PTHR12708">
    <property type="entry name" value="DNA POLYMERASE EPSILON SUBUNIT B"/>
    <property type="match status" value="1"/>
</dbReference>
<dbReference type="Pfam" id="PF04042">
    <property type="entry name" value="DNA_pol_E_B"/>
    <property type="match status" value="1"/>
</dbReference>
<dbReference type="Pfam" id="PF12213">
    <property type="entry name" value="Dpoe2NT"/>
    <property type="match status" value="1"/>
</dbReference>
<dbReference type="PIRSF" id="PIRSF000799">
    <property type="entry name" value="DNA_pol_eps_2"/>
    <property type="match status" value="1"/>
</dbReference>
<gene>
    <name type="primary">pole-2</name>
    <name type="ORF">F08B4.5</name>
</gene>
<comment type="function">
    <text evidence="2 3">Accessory component of the DNA polymerase epsilon complex (By similarity). Participates in DNA repair and in chromosomal DNA replication (By similarity).</text>
</comment>
<comment type="subunit">
    <text evidence="1">Consists of four subunits.</text>
</comment>
<comment type="subcellular location">
    <subcellularLocation>
        <location evidence="1">Nucleus</location>
    </subcellularLocation>
</comment>
<comment type="miscellaneous">
    <text>In eukaryotes there are five DNA polymerases: alpha, beta, gamma, delta, and epsilon which are responsible for different reactions of DNA synthesis.</text>
</comment>
<comment type="similarity">
    <text evidence="4">Belongs to the DNA polymerase epsilon subunit B family.</text>
</comment>
<organism>
    <name type="scientific">Caenorhabditis elegans</name>
    <dbReference type="NCBI Taxonomy" id="6239"/>
    <lineage>
        <taxon>Eukaryota</taxon>
        <taxon>Metazoa</taxon>
        <taxon>Ecdysozoa</taxon>
        <taxon>Nematoda</taxon>
        <taxon>Chromadorea</taxon>
        <taxon>Rhabditida</taxon>
        <taxon>Rhabditina</taxon>
        <taxon>Rhabditomorpha</taxon>
        <taxon>Rhabditoidea</taxon>
        <taxon>Rhabditidae</taxon>
        <taxon>Peloderinae</taxon>
        <taxon>Caenorhabditis</taxon>
    </lineage>
</organism>
<protein>
    <recommendedName>
        <fullName>Probable DNA polymerase epsilon subunit 2</fullName>
    </recommendedName>
    <alternativeName>
        <fullName>DNA polymerase II subunit 2</fullName>
    </alternativeName>
    <alternativeName>
        <fullName>DNA polymerase epsilon subunit B</fullName>
    </alternativeName>
</protein>
<feature type="chain" id="PRO_0000071565" description="Probable DNA polymerase epsilon subunit 2">
    <location>
        <begin position="1"/>
        <end position="534"/>
    </location>
</feature>
<name>DPOE2_CAEEL</name>
<reference key="1">
    <citation type="journal article" date="1998" name="Science">
        <title>Genome sequence of the nematode C. elegans: a platform for investigating biology.</title>
        <authorList>
            <consortium name="The C. elegans sequencing consortium"/>
        </authorList>
    </citation>
    <scope>NUCLEOTIDE SEQUENCE [LARGE SCALE GENOMIC DNA]</scope>
    <source>
        <strain>Bristol N2</strain>
    </source>
</reference>
<accession>Q19196</accession>
<evidence type="ECO:0000250" key="1"/>
<evidence type="ECO:0000250" key="2">
    <source>
        <dbReference type="UniProtKB" id="P24482"/>
    </source>
</evidence>
<evidence type="ECO:0000250" key="3">
    <source>
        <dbReference type="UniProtKB" id="P56282"/>
    </source>
</evidence>
<evidence type="ECO:0000305" key="4"/>